<proteinExistence type="evidence at transcript level"/>
<sequence length="421" mass="46889">MDSFSRLSIFCLFISLLPLFSSPALLFQGFNWESSKKGGWYNSLKNSIPDLANAGITHVWLPPPSQSVSPEGYLPGRLYDLDASKYGSKNELKSLIAAFHEKGIKCLADIVINHRTAERKDGRGIYCIFEGGTPDSRQDWGPSFICRDDTAYSDGTGNNDSGEGYDAAPDIDHLNPQVQRELSEWMNWLKTEIGFDGWRFDFVKGYAPSISKIYMEQTKPDFAVGEKWDSISYGQDGKPNYNQDSHRGALVNWVESAGGAITAFDFTTKGILQAAVQGELWRLIDPNGKPPGMIGVKPENAVTFIDNHDTGSTQRLWPFPSDKVMQGYAYILTHPGTPSIFYDHFFDWGLKEQIAKLSSIRLRNGINEKSTVKIMASEGDLYVAKIDNKIMVKIGPKMDLGNLIPSNLHVATSGQDYAVWE</sequence>
<name>AMYA_VIGMU</name>
<evidence type="ECO:0000250" key="1"/>
<evidence type="ECO:0000250" key="2">
    <source>
        <dbReference type="UniProtKB" id="P00693"/>
    </source>
</evidence>
<evidence type="ECO:0000250" key="3">
    <source>
        <dbReference type="UniProtKB" id="P04063"/>
    </source>
</evidence>
<evidence type="ECO:0000305" key="4"/>
<reference key="1">
    <citation type="journal article" date="1990" name="Nucleic Acids Res.">
        <title>Nucleotide sequence of cDNA for alpha-amylase from cotyledons of germinating Vigna mungo seeds.</title>
        <authorList>
            <person name="Yamauchi D."/>
            <person name="Minamikawa T."/>
        </authorList>
    </citation>
    <scope>NUCLEOTIDE SEQUENCE [MRNA]</scope>
    <source>
        <tissue>Cotyledon</tissue>
    </source>
</reference>
<reference key="2">
    <citation type="journal article" date="1993" name="Plant Physiol.">
        <title>Nucleotide sequence of the alpha-amylase gene from Vigna mungo.</title>
        <authorList>
            <person name="Takeuchi H."/>
            <person name="Yamauchi D."/>
            <person name="Wada S."/>
            <person name="Minamikawa T."/>
        </authorList>
    </citation>
    <scope>NUCLEOTIDE SEQUENCE [GENOMIC DNA]</scope>
</reference>
<dbReference type="EC" id="3.2.1.1" evidence="2"/>
<dbReference type="EMBL" id="X53049">
    <property type="protein sequence ID" value="CAA37217.1"/>
    <property type="molecule type" value="mRNA"/>
</dbReference>
<dbReference type="EMBL" id="X73301">
    <property type="protein sequence ID" value="CAA51734.1"/>
    <property type="molecule type" value="Genomic_DNA"/>
</dbReference>
<dbReference type="PIR" id="S10514">
    <property type="entry name" value="S10514"/>
</dbReference>
<dbReference type="SMR" id="P17859"/>
<dbReference type="CAZy" id="GH13">
    <property type="family name" value="Glycoside Hydrolase Family 13"/>
</dbReference>
<dbReference type="GO" id="GO:0004556">
    <property type="term" value="F:alpha-amylase activity"/>
    <property type="evidence" value="ECO:0007669"/>
    <property type="project" value="UniProtKB-EC"/>
</dbReference>
<dbReference type="GO" id="GO:0005509">
    <property type="term" value="F:calcium ion binding"/>
    <property type="evidence" value="ECO:0007669"/>
    <property type="project" value="InterPro"/>
</dbReference>
<dbReference type="GO" id="GO:0005975">
    <property type="term" value="P:carbohydrate metabolic process"/>
    <property type="evidence" value="ECO:0007669"/>
    <property type="project" value="InterPro"/>
</dbReference>
<dbReference type="CDD" id="cd11314">
    <property type="entry name" value="AmyAc_arch_bac_plant_AmyA"/>
    <property type="match status" value="1"/>
</dbReference>
<dbReference type="Gene3D" id="3.20.20.80">
    <property type="entry name" value="Glycosidases"/>
    <property type="match status" value="1"/>
</dbReference>
<dbReference type="Gene3D" id="2.60.40.1180">
    <property type="entry name" value="Golgi alpha-mannosidase II"/>
    <property type="match status" value="1"/>
</dbReference>
<dbReference type="InterPro" id="IPR012850">
    <property type="entry name" value="A-amylase_bs_C"/>
</dbReference>
<dbReference type="InterPro" id="IPR013775">
    <property type="entry name" value="A-amylase_pln"/>
</dbReference>
<dbReference type="InterPro" id="IPR006046">
    <property type="entry name" value="Alpha_amylase"/>
</dbReference>
<dbReference type="InterPro" id="IPR006047">
    <property type="entry name" value="Glyco_hydro_13_cat_dom"/>
</dbReference>
<dbReference type="InterPro" id="IPR013780">
    <property type="entry name" value="Glyco_hydro_b"/>
</dbReference>
<dbReference type="InterPro" id="IPR017853">
    <property type="entry name" value="Glycoside_hydrolase_SF"/>
</dbReference>
<dbReference type="PANTHER" id="PTHR43447">
    <property type="entry name" value="ALPHA-AMYLASE"/>
    <property type="match status" value="1"/>
</dbReference>
<dbReference type="Pfam" id="PF07821">
    <property type="entry name" value="Alpha-amyl_C2"/>
    <property type="match status" value="1"/>
</dbReference>
<dbReference type="Pfam" id="PF00128">
    <property type="entry name" value="Alpha-amylase"/>
    <property type="match status" value="1"/>
</dbReference>
<dbReference type="PIRSF" id="PIRSF001028">
    <property type="entry name" value="Alph-amls_plant"/>
    <property type="match status" value="1"/>
</dbReference>
<dbReference type="PRINTS" id="PR00110">
    <property type="entry name" value="ALPHAAMYLASE"/>
</dbReference>
<dbReference type="SMART" id="SM00642">
    <property type="entry name" value="Aamy"/>
    <property type="match status" value="1"/>
</dbReference>
<dbReference type="SMART" id="SM00810">
    <property type="entry name" value="Alpha-amyl_C2"/>
    <property type="match status" value="1"/>
</dbReference>
<dbReference type="SUPFAM" id="SSF51445">
    <property type="entry name" value="(Trans)glycosidases"/>
    <property type="match status" value="1"/>
</dbReference>
<dbReference type="SUPFAM" id="SSF51011">
    <property type="entry name" value="Glycosyl hydrolase domain"/>
    <property type="match status" value="1"/>
</dbReference>
<feature type="signal peptide" evidence="4">
    <location>
        <begin position="1"/>
        <end position="23"/>
    </location>
</feature>
<feature type="chain" id="PRO_0000001417" description="Alpha-amylase">
    <location>
        <begin position="24"/>
        <end position="421"/>
    </location>
</feature>
<feature type="active site" description="Nucleophile" evidence="2">
    <location>
        <position position="201"/>
    </location>
</feature>
<feature type="active site" description="Proton donor" evidence="2">
    <location>
        <position position="226"/>
    </location>
</feature>
<feature type="binding site" evidence="3">
    <location>
        <begin position="73"/>
        <end position="74"/>
    </location>
    <ligand>
        <name>substrate</name>
    </ligand>
</feature>
<feature type="binding site" evidence="2">
    <location>
        <position position="113"/>
    </location>
    <ligand>
        <name>Ca(2+)</name>
        <dbReference type="ChEBI" id="CHEBI:29108"/>
        <label>1</label>
    </ligand>
</feature>
<feature type="binding site" evidence="2">
    <location>
        <position position="130"/>
    </location>
    <ligand>
        <name>Ca(2+)</name>
        <dbReference type="ChEBI" id="CHEBI:29108"/>
        <label>2</label>
    </ligand>
</feature>
<feature type="binding site" evidence="2">
    <location>
        <position position="133"/>
    </location>
    <ligand>
        <name>Ca(2+)</name>
        <dbReference type="ChEBI" id="CHEBI:29108"/>
        <label>2</label>
    </ligand>
</feature>
<feature type="binding site" evidence="2">
    <location>
        <position position="135"/>
    </location>
    <ligand>
        <name>Ca(2+)</name>
        <dbReference type="ChEBI" id="CHEBI:29108"/>
        <label>2</label>
    </ligand>
</feature>
<feature type="binding site" evidence="3">
    <location>
        <position position="139"/>
    </location>
    <ligand>
        <name>Ca(2+)</name>
        <dbReference type="ChEBI" id="CHEBI:29108"/>
        <label>2</label>
    </ligand>
</feature>
<feature type="binding site" evidence="3">
    <location>
        <position position="149"/>
    </location>
    <ligand>
        <name>Ca(2+)</name>
        <dbReference type="ChEBI" id="CHEBI:29108"/>
        <label>3</label>
    </ligand>
</feature>
<feature type="binding site" evidence="3">
    <location>
        <position position="160"/>
    </location>
    <ligand>
        <name>Ca(2+)</name>
        <dbReference type="ChEBI" id="CHEBI:29108"/>
        <label>1</label>
    </ligand>
</feature>
<feature type="binding site" evidence="3">
    <location>
        <position position="168"/>
    </location>
    <ligand>
        <name>Ca(2+)</name>
        <dbReference type="ChEBI" id="CHEBI:29108"/>
        <label>3</label>
    </ligand>
</feature>
<feature type="binding site" evidence="3">
    <location>
        <position position="170"/>
    </location>
    <ligand>
        <name>Ca(2+)</name>
        <dbReference type="ChEBI" id="CHEBI:29108"/>
        <label>1</label>
    </ligand>
</feature>
<feature type="binding site" evidence="3">
    <location>
        <position position="170"/>
    </location>
    <ligand>
        <name>Ca(2+)</name>
        <dbReference type="ChEBI" id="CHEBI:29108"/>
        <label>3</label>
    </ligand>
</feature>
<feature type="binding site" evidence="3">
    <location>
        <begin position="199"/>
        <end position="204"/>
    </location>
    <ligand>
        <name>substrate</name>
    </ligand>
</feature>
<feature type="binding site" evidence="3">
    <location>
        <position position="205"/>
    </location>
    <ligand>
        <name>Ca(2+)</name>
        <dbReference type="ChEBI" id="CHEBI:29108"/>
        <label>1</label>
    </ligand>
</feature>
<feature type="binding site" evidence="2">
    <location>
        <position position="228"/>
    </location>
    <ligand>
        <name>substrate</name>
    </ligand>
</feature>
<feature type="binding site" evidence="3">
    <location>
        <position position="230"/>
    </location>
    <ligand>
        <name>substrate</name>
    </ligand>
</feature>
<feature type="binding site" evidence="1">
    <location>
        <position position="255"/>
    </location>
    <ligand>
        <name>substrate</name>
    </ligand>
</feature>
<feature type="binding site" evidence="2">
    <location>
        <position position="289"/>
    </location>
    <ligand>
        <name>substrate</name>
    </ligand>
</feature>
<feature type="binding site" evidence="2">
    <location>
        <position position="308"/>
    </location>
    <ligand>
        <name>substrate</name>
    </ligand>
</feature>
<feature type="binding site" evidence="2">
    <location>
        <position position="314"/>
    </location>
    <ligand>
        <name>substrate</name>
    </ligand>
</feature>
<feature type="binding site" evidence="2">
    <location>
        <position position="393"/>
    </location>
    <ligand>
        <name>substrate</name>
    </ligand>
</feature>
<feature type="binding site" evidence="2">
    <location>
        <position position="420"/>
    </location>
    <ligand>
        <name>substrate</name>
    </ligand>
</feature>
<feature type="site" description="Transition state stabilizer" evidence="2">
    <location>
        <position position="309"/>
    </location>
</feature>
<organism>
    <name type="scientific">Vigna mungo</name>
    <name type="common">Black gram</name>
    <name type="synonym">Phaseolus mungo</name>
    <dbReference type="NCBI Taxonomy" id="3915"/>
    <lineage>
        <taxon>Eukaryota</taxon>
        <taxon>Viridiplantae</taxon>
        <taxon>Streptophyta</taxon>
        <taxon>Embryophyta</taxon>
        <taxon>Tracheophyta</taxon>
        <taxon>Spermatophyta</taxon>
        <taxon>Magnoliopsida</taxon>
        <taxon>eudicotyledons</taxon>
        <taxon>Gunneridae</taxon>
        <taxon>Pentapetalae</taxon>
        <taxon>rosids</taxon>
        <taxon>fabids</taxon>
        <taxon>Fabales</taxon>
        <taxon>Fabaceae</taxon>
        <taxon>Papilionoideae</taxon>
        <taxon>50 kb inversion clade</taxon>
        <taxon>NPAAA clade</taxon>
        <taxon>indigoferoid/millettioid clade</taxon>
        <taxon>Phaseoleae</taxon>
        <taxon>Vigna</taxon>
    </lineage>
</organism>
<keyword id="KW-0106">Calcium</keyword>
<keyword id="KW-0119">Carbohydrate metabolism</keyword>
<keyword id="KW-0326">Glycosidase</keyword>
<keyword id="KW-0378">Hydrolase</keyword>
<keyword id="KW-0479">Metal-binding</keyword>
<keyword id="KW-0732">Signal</keyword>
<comment type="catalytic activity">
    <reaction evidence="2">
        <text>Endohydrolysis of (1-&gt;4)-alpha-D-glucosidic linkages in polysaccharides containing three or more (1-&gt;4)-alpha-linked D-glucose units.</text>
        <dbReference type="EC" id="3.2.1.1"/>
    </reaction>
</comment>
<comment type="cofactor">
    <cofactor evidence="2">
        <name>Ca(2+)</name>
        <dbReference type="ChEBI" id="CHEBI:29108"/>
    </cofactor>
    <text evidence="2">Binds 3 Ca(2+) ions per subunit.</text>
</comment>
<comment type="subunit">
    <text evidence="1">Monomer.</text>
</comment>
<comment type="miscellaneous">
    <text evidence="1">Binds starch not only at the active site, but also via accessory binding sites on the protein surface that are important for efficient binding to starch granules and thereby increase enzyme activity.</text>
</comment>
<comment type="similarity">
    <text evidence="4">Belongs to the glycosyl hydrolase 13 family.</text>
</comment>
<accession>P17859</accession>
<protein>
    <recommendedName>
        <fullName>Alpha-amylase</fullName>
        <ecNumber evidence="2">3.2.1.1</ecNumber>
    </recommendedName>
    <alternativeName>
        <fullName>1,4-alpha-D-glucan glucanohydrolase</fullName>
    </alternativeName>
</protein>
<gene>
    <name type="primary">AMY1.1</name>
</gene>